<gene>
    <name evidence="13" type="primary">Kcnh4</name>
    <name type="synonym">Elk1</name>
    <name type="synonym">Elk3</name>
</gene>
<accession>Q9R1T9</accession>
<accession>O89048</accession>
<comment type="function">
    <text evidence="9">Pore-forming (alpha) subunit of a voltage-gated delayed rectifier (PubMed:9824707). Activates at more negative voltages, exhibits fast prepulse-independent activation kinetics and deactivates much more slowly, but shows no inactivation (PubMed:9824707).</text>
</comment>
<comment type="catalytic activity">
    <reaction evidence="9">
        <text>K(+)(in) = K(+)(out)</text>
        <dbReference type="Rhea" id="RHEA:29463"/>
        <dbReference type="ChEBI" id="CHEBI:29103"/>
    </reaction>
</comment>
<comment type="subunit">
    <text evidence="2">The potassium channel is probably composed of a homo- or heterotetrameric complex of pore-forming alpha subunits that can associate with modulating beta subunits.</text>
</comment>
<comment type="subcellular location">
    <subcellularLocation>
        <location evidence="3">Membrane</location>
        <topology evidence="3">Multi-pass membrane protein</topology>
    </subcellularLocation>
</comment>
<comment type="tissue specificity">
    <text evidence="8 9">Highly expressed in adult testis, and in adult and embryonic brain (PubMed:9824707). In adult brain found in piriform cortex, olfactory tubercle, cerebral cortex, hippocampus pyramidial cells and dentate gyrus and basal ganglia of caudate/putamen and accumbens nucleus (PubMed:11425889). Detected at intermediate levels in lung, spinal cord, and pituitary (PubMed:9824707).</text>
</comment>
<comment type="similarity">
    <text evidence="12">Belongs to the potassium channel family. H (Eag) (TC 1.A.1.20) subfamily. Kv12.3/KCNH4 sub-subfamily.</text>
</comment>
<proteinExistence type="evidence at transcript level"/>
<protein>
    <recommendedName>
        <fullName evidence="12">Voltage-gated delayed rectifier potassium channel KCNH4</fullName>
    </recommendedName>
    <alternativeName>
        <fullName>Brain-specific eag-like channel 2</fullName>
        <shortName evidence="10">BEC2</shortName>
    </alternativeName>
    <alternativeName>
        <fullName>Ether-a-go-go-like potassium channel 1</fullName>
        <shortName>ELK channel 1</shortName>
        <shortName evidence="11">rElk1</shortName>
    </alternativeName>
    <alternativeName>
        <fullName>Potassium voltage-gated channel subfamily H member 4</fullName>
    </alternativeName>
    <alternativeName>
        <fullName>Voltage-gated potassium channel subunit Kv12.3</fullName>
    </alternativeName>
</protein>
<feature type="chain" id="PRO_0000054009" description="Voltage-gated delayed rectifier potassium channel KCNH4">
    <location>
        <begin position="1"/>
        <end position="1017"/>
    </location>
</feature>
<feature type="topological domain" description="Cytoplasmic" evidence="3">
    <location>
        <begin position="1"/>
        <end position="232"/>
    </location>
</feature>
<feature type="transmembrane region" description="Helical; Name=Segment S1" evidence="3">
    <location>
        <begin position="233"/>
        <end position="253"/>
    </location>
</feature>
<feature type="topological domain" description="Extracellular" evidence="3">
    <location>
        <begin position="254"/>
        <end position="262"/>
    </location>
</feature>
<feature type="transmembrane region" description="Helical; Name=Segment S2" evidence="3">
    <location>
        <begin position="263"/>
        <end position="283"/>
    </location>
</feature>
<feature type="topological domain" description="Cytoplasmic" evidence="3">
    <location>
        <begin position="284"/>
        <end position="305"/>
    </location>
</feature>
<feature type="transmembrane region" description="Helical; Name=Segment S3" evidence="3">
    <location>
        <begin position="306"/>
        <end position="326"/>
    </location>
</feature>
<feature type="topological domain" description="Extracellular" evidence="3">
    <location>
        <begin position="327"/>
        <end position="334"/>
    </location>
</feature>
<feature type="transmembrane region" description="Helical; Voltage-sensor; Name=Segment S4" evidence="3">
    <location>
        <begin position="335"/>
        <end position="355"/>
    </location>
</feature>
<feature type="topological domain" description="Cytoplasmic" evidence="3">
    <location>
        <begin position="356"/>
        <end position="364"/>
    </location>
</feature>
<feature type="transmembrane region" description="Helical; Name=Segment S5" evidence="3">
    <location>
        <begin position="365"/>
        <end position="385"/>
    </location>
</feature>
<feature type="topological domain" description="Extracellular" evidence="3">
    <location>
        <begin position="386"/>
        <end position="427"/>
    </location>
</feature>
<feature type="intramembrane region" description="Pore-forming; Name=Segment H5" evidence="3">
    <location>
        <begin position="428"/>
        <end position="448"/>
    </location>
</feature>
<feature type="topological domain" description="Extracellular" evidence="3">
    <location>
        <begin position="449"/>
        <end position="454"/>
    </location>
</feature>
<feature type="transmembrane region" description="Helical; Name=Segment S6" evidence="3">
    <location>
        <begin position="455"/>
        <end position="475"/>
    </location>
</feature>
<feature type="topological domain" description="Cytoplasmic" evidence="3">
    <location>
        <begin position="476"/>
        <end position="1017"/>
    </location>
</feature>
<feature type="domain" description="PAS" evidence="5">
    <location>
        <begin position="14"/>
        <end position="90"/>
    </location>
</feature>
<feature type="domain" description="PAC" evidence="6">
    <location>
        <begin position="93"/>
        <end position="145"/>
    </location>
</feature>
<feature type="region of interest" description="Disordered" evidence="7">
    <location>
        <begin position="139"/>
        <end position="170"/>
    </location>
</feature>
<feature type="region of interest" description="cNMP-binding domain" evidence="4">
    <location>
        <begin position="557"/>
        <end position="621"/>
    </location>
</feature>
<feature type="region of interest" description="Disordered" evidence="7">
    <location>
        <begin position="690"/>
        <end position="749"/>
    </location>
</feature>
<feature type="region of interest" description="Disordered" evidence="7">
    <location>
        <begin position="771"/>
        <end position="870"/>
    </location>
</feature>
<feature type="region of interest" description="Disordered" evidence="7">
    <location>
        <begin position="972"/>
        <end position="1017"/>
    </location>
</feature>
<feature type="coiled-coil region" evidence="3">
    <location>
        <begin position="873"/>
        <end position="907"/>
    </location>
</feature>
<feature type="short sequence motif" description="Selectivity filter" evidence="1">
    <location>
        <begin position="440"/>
        <end position="445"/>
    </location>
</feature>
<feature type="compositionally biased region" description="Polar residues" evidence="7">
    <location>
        <begin position="703"/>
        <end position="726"/>
    </location>
</feature>
<feature type="compositionally biased region" description="Low complexity" evidence="7">
    <location>
        <begin position="771"/>
        <end position="786"/>
    </location>
</feature>
<feature type="compositionally biased region" description="Low complexity" evidence="7">
    <location>
        <begin position="806"/>
        <end position="820"/>
    </location>
</feature>
<feature type="compositionally biased region" description="Pro residues" evidence="7">
    <location>
        <begin position="980"/>
        <end position="996"/>
    </location>
</feature>
<feature type="compositionally biased region" description="Polar residues" evidence="7">
    <location>
        <begin position="1008"/>
        <end position="1017"/>
    </location>
</feature>
<feature type="glycosylation site" description="N-linked (GlcNAc...) asparagine" evidence="3">
    <location>
        <position position="415"/>
    </location>
</feature>
<feature type="sequence conflict" description="In Ref. 1; CAA07587." evidence="12" ref="1">
    <original>R</original>
    <variation>W</variation>
    <location>
        <position position="825"/>
    </location>
</feature>
<evidence type="ECO:0000250" key="1"/>
<evidence type="ECO:0000250" key="2">
    <source>
        <dbReference type="UniProtKB" id="Q9UQ05"/>
    </source>
</evidence>
<evidence type="ECO:0000255" key="3"/>
<evidence type="ECO:0000255" key="4">
    <source>
        <dbReference type="PROSITE-ProRule" id="PRU00060"/>
    </source>
</evidence>
<evidence type="ECO:0000255" key="5">
    <source>
        <dbReference type="PROSITE-ProRule" id="PRU00140"/>
    </source>
</evidence>
<evidence type="ECO:0000255" key="6">
    <source>
        <dbReference type="PROSITE-ProRule" id="PRU00141"/>
    </source>
</evidence>
<evidence type="ECO:0000256" key="7">
    <source>
        <dbReference type="SAM" id="MobiDB-lite"/>
    </source>
</evidence>
<evidence type="ECO:0000269" key="8">
    <source>
    </source>
</evidence>
<evidence type="ECO:0000269" key="9">
    <source>
    </source>
</evidence>
<evidence type="ECO:0000303" key="10">
    <source>
    </source>
</evidence>
<evidence type="ECO:0000303" key="11">
    <source>
    </source>
</evidence>
<evidence type="ECO:0000305" key="12"/>
<evidence type="ECO:0000312" key="13">
    <source>
        <dbReference type="RGD" id="621415"/>
    </source>
</evidence>
<name>KCNH4_RAT</name>
<dbReference type="EMBL" id="AJ007628">
    <property type="protein sequence ID" value="CAA07587.1"/>
    <property type="molecule type" value="mRNA"/>
</dbReference>
<dbReference type="EMBL" id="AB022699">
    <property type="protein sequence ID" value="BAA83593.1"/>
    <property type="molecule type" value="mRNA"/>
</dbReference>
<dbReference type="PIR" id="T31354">
    <property type="entry name" value="T31354"/>
</dbReference>
<dbReference type="RefSeq" id="NP_446082.1">
    <property type="nucleotide sequence ID" value="NM_053630.1"/>
</dbReference>
<dbReference type="SMR" id="Q9R1T9"/>
<dbReference type="FunCoup" id="Q9R1T9">
    <property type="interactions" value="169"/>
</dbReference>
<dbReference type="STRING" id="10116.ENSRNOP00000025518"/>
<dbReference type="GlyCosmos" id="Q9R1T9">
    <property type="glycosylation" value="1 site, No reported glycans"/>
</dbReference>
<dbReference type="GlyGen" id="Q9R1T9">
    <property type="glycosylation" value="4 sites"/>
</dbReference>
<dbReference type="PhosphoSitePlus" id="Q9R1T9"/>
<dbReference type="PaxDb" id="10116-ENSRNOP00000025518"/>
<dbReference type="GeneID" id="114032"/>
<dbReference type="KEGG" id="rno:114032"/>
<dbReference type="UCSC" id="RGD:621415">
    <property type="organism name" value="rat"/>
</dbReference>
<dbReference type="AGR" id="RGD:621415"/>
<dbReference type="CTD" id="23415"/>
<dbReference type="RGD" id="621415">
    <property type="gene designation" value="Kcnh4"/>
</dbReference>
<dbReference type="eggNOG" id="KOG0498">
    <property type="taxonomic scope" value="Eukaryota"/>
</dbReference>
<dbReference type="InParanoid" id="Q9R1T9"/>
<dbReference type="PhylomeDB" id="Q9R1T9"/>
<dbReference type="Reactome" id="R-RNO-1296072">
    <property type="pathway name" value="Voltage gated Potassium channels"/>
</dbReference>
<dbReference type="PRO" id="PR:Q9R1T9"/>
<dbReference type="Proteomes" id="UP000002494">
    <property type="component" value="Unplaced"/>
</dbReference>
<dbReference type="GO" id="GO:0034702">
    <property type="term" value="C:monoatomic ion channel complex"/>
    <property type="evidence" value="ECO:0007669"/>
    <property type="project" value="UniProtKB-KW"/>
</dbReference>
<dbReference type="GO" id="GO:0005886">
    <property type="term" value="C:plasma membrane"/>
    <property type="evidence" value="ECO:0000318"/>
    <property type="project" value="GO_Central"/>
</dbReference>
<dbReference type="GO" id="GO:0005249">
    <property type="term" value="F:voltage-gated potassium channel activity"/>
    <property type="evidence" value="ECO:0000318"/>
    <property type="project" value="GO_Central"/>
</dbReference>
<dbReference type="GO" id="GO:0071805">
    <property type="term" value="P:potassium ion transmembrane transport"/>
    <property type="evidence" value="ECO:0000318"/>
    <property type="project" value="GO_Central"/>
</dbReference>
<dbReference type="GO" id="GO:0042391">
    <property type="term" value="P:regulation of membrane potential"/>
    <property type="evidence" value="ECO:0000318"/>
    <property type="project" value="GO_Central"/>
</dbReference>
<dbReference type="CDD" id="cd00038">
    <property type="entry name" value="CAP_ED"/>
    <property type="match status" value="1"/>
</dbReference>
<dbReference type="CDD" id="cd00130">
    <property type="entry name" value="PAS"/>
    <property type="match status" value="1"/>
</dbReference>
<dbReference type="FunFam" id="3.30.450.20:FF:000001">
    <property type="entry name" value="Potassium voltage-gated channel subfamily H member 7"/>
    <property type="match status" value="1"/>
</dbReference>
<dbReference type="FunFam" id="1.10.1200.260:FF:000002">
    <property type="entry name" value="Potassium voltage-gated channel subfamily H member 8"/>
    <property type="match status" value="1"/>
</dbReference>
<dbReference type="FunFam" id="2.60.120.10:FF:000014">
    <property type="entry name" value="Potassium voltage-gated channel, subfamily H (Eag-related), member 4"/>
    <property type="match status" value="1"/>
</dbReference>
<dbReference type="Gene3D" id="1.10.1200.260">
    <property type="match status" value="1"/>
</dbReference>
<dbReference type="Gene3D" id="1.10.287.70">
    <property type="match status" value="1"/>
</dbReference>
<dbReference type="Gene3D" id="2.60.120.10">
    <property type="entry name" value="Jelly Rolls"/>
    <property type="match status" value="1"/>
</dbReference>
<dbReference type="Gene3D" id="3.30.450.20">
    <property type="entry name" value="PAS domain"/>
    <property type="match status" value="1"/>
</dbReference>
<dbReference type="InterPro" id="IPR000595">
    <property type="entry name" value="cNMP-bd_dom"/>
</dbReference>
<dbReference type="InterPro" id="IPR018490">
    <property type="entry name" value="cNMP-bd_dom_sf"/>
</dbReference>
<dbReference type="InterPro" id="IPR005821">
    <property type="entry name" value="Ion_trans_dom"/>
</dbReference>
<dbReference type="InterPro" id="IPR003938">
    <property type="entry name" value="K_chnl_volt-dep_EAG/ELK/ERG"/>
</dbReference>
<dbReference type="InterPro" id="IPR003950">
    <property type="entry name" value="K_chnl_volt-dep_ELK"/>
</dbReference>
<dbReference type="InterPro" id="IPR050818">
    <property type="entry name" value="KCNH_animal-type"/>
</dbReference>
<dbReference type="InterPro" id="IPR001610">
    <property type="entry name" value="PAC"/>
</dbReference>
<dbReference type="InterPro" id="IPR000014">
    <property type="entry name" value="PAS"/>
</dbReference>
<dbReference type="InterPro" id="IPR000700">
    <property type="entry name" value="PAS-assoc_C"/>
</dbReference>
<dbReference type="InterPro" id="IPR035965">
    <property type="entry name" value="PAS-like_dom_sf"/>
</dbReference>
<dbReference type="InterPro" id="IPR014710">
    <property type="entry name" value="RmlC-like_jellyroll"/>
</dbReference>
<dbReference type="NCBIfam" id="TIGR00229">
    <property type="entry name" value="sensory_box"/>
    <property type="match status" value="1"/>
</dbReference>
<dbReference type="PANTHER" id="PTHR10217:SF630">
    <property type="entry name" value="POTASSIUM VOLTAGE-GATED CHANNEL SUBFAMILY H MEMBER 4"/>
    <property type="match status" value="1"/>
</dbReference>
<dbReference type="PANTHER" id="PTHR10217">
    <property type="entry name" value="VOLTAGE AND LIGAND GATED POTASSIUM CHANNEL"/>
    <property type="match status" value="1"/>
</dbReference>
<dbReference type="Pfam" id="PF00520">
    <property type="entry name" value="Ion_trans"/>
    <property type="match status" value="1"/>
</dbReference>
<dbReference type="Pfam" id="PF13426">
    <property type="entry name" value="PAS_9"/>
    <property type="match status" value="1"/>
</dbReference>
<dbReference type="PRINTS" id="PR01463">
    <property type="entry name" value="EAGCHANLFMLY"/>
</dbReference>
<dbReference type="PRINTS" id="PR01465">
    <property type="entry name" value="ELKCHANNEL"/>
</dbReference>
<dbReference type="SMART" id="SM00100">
    <property type="entry name" value="cNMP"/>
    <property type="match status" value="1"/>
</dbReference>
<dbReference type="SMART" id="SM00086">
    <property type="entry name" value="PAC"/>
    <property type="match status" value="1"/>
</dbReference>
<dbReference type="SUPFAM" id="SSF51206">
    <property type="entry name" value="cAMP-binding domain-like"/>
    <property type="match status" value="1"/>
</dbReference>
<dbReference type="SUPFAM" id="SSF55785">
    <property type="entry name" value="PYP-like sensor domain (PAS domain)"/>
    <property type="match status" value="1"/>
</dbReference>
<dbReference type="SUPFAM" id="SSF81324">
    <property type="entry name" value="Voltage-gated potassium channels"/>
    <property type="match status" value="1"/>
</dbReference>
<dbReference type="PROSITE" id="PS50042">
    <property type="entry name" value="CNMP_BINDING_3"/>
    <property type="match status" value="1"/>
</dbReference>
<dbReference type="PROSITE" id="PS50113">
    <property type="entry name" value="PAC"/>
    <property type="match status" value="1"/>
</dbReference>
<dbReference type="PROSITE" id="PS50112">
    <property type="entry name" value="PAS"/>
    <property type="match status" value="1"/>
</dbReference>
<organism>
    <name type="scientific">Rattus norvegicus</name>
    <name type="common">Rat</name>
    <dbReference type="NCBI Taxonomy" id="10116"/>
    <lineage>
        <taxon>Eukaryota</taxon>
        <taxon>Metazoa</taxon>
        <taxon>Chordata</taxon>
        <taxon>Craniata</taxon>
        <taxon>Vertebrata</taxon>
        <taxon>Euteleostomi</taxon>
        <taxon>Mammalia</taxon>
        <taxon>Eutheria</taxon>
        <taxon>Euarchontoglires</taxon>
        <taxon>Glires</taxon>
        <taxon>Rodentia</taxon>
        <taxon>Myomorpha</taxon>
        <taxon>Muroidea</taxon>
        <taxon>Muridae</taxon>
        <taxon>Murinae</taxon>
        <taxon>Rattus</taxon>
    </lineage>
</organism>
<sequence length="1017" mass="111404">MPVMKGLLAPQNTFLDTIATRFDGTHSNFLLANAQGPRGFPIVYCSDGFCELTGYGRTEVMQKTCSCRFLYGPETSEPALQRLQKALEGHQEHRAEICFYRKDGSAFWCLLDMMPIKNELGEVVLFLFSFKDISQSGGPGLGSPGIHGDNNNHENSLGRRGASSRLRSTRRQNRTVLHRLTGHFGRRDQGSVKANSNVFEPKPSVPEYKVASVGGSRCLLLHYSIPKAVWDGLILLATFYVAVTVPYNVCFAGDDDTPITSRHTLVSDIAVEMLFILDIILNFRTTYVSQSGQVVSAPRSIGLHYLATWFFVDLIAALPFDLLYVFNITVTSLVHLLKTVRLLRLLRLLQKLERYSQCSAVVLTLLMSVFALLAHWMACVWYVIGRREMEANDPLLWDIGWLHELGKRLEEPYVNGSAGGPSRRSAYIAALYFTLSSLTSVGFGNVCANTDAEKIFSICTMLIGALMHAVVFGNVTAIIQRMYSRRSLYHSRMKDLKDFIRVHRLPRPLKQRMLEYFQTTWAVNSGIDANELLRDFPDELRADIAMHLNREILQLPLFGAASRGCLRALSLHIKTSFCAPGEFLLRRGDALQAHYYVCSGSLEVLRDNTVLAILGKGDLIGADIPELGQEPGAGAGCVLKTSADVKALTYCGLQQLSSRGLAEVLRLYPEYVAAFRAGLPRDLTFNLRQGSENNGLGRFSRSPRLSQARSDTLGSSSDKTLPSITETEGGMEPGAGSKPRRPLLLPNLSPARPRGSLVSLLGEELPPFSALVSSPSLSPTPSPALAGRGSSPSLHGPPRGSAAWKPPQLLTPPLGTFGPPDLSPRIVDGIEDSSNTAEAPTFRFSKRPEPTRTRSQAPLSGPRLSRELATEAAEEVKEKVCRLNQEISRLNQEVSQLSRELRQVMGLLQARLGPPSHPPDSTWLPDLPCPHQRPPCISPHMSGPPPGLQNTTLAVVHCPASVGTVEIGATPSELRSSMVPPFPSEPDPLGPSPVPEASPLTPSLLKHSFQSGSDTFH</sequence>
<keyword id="KW-0175">Coiled coil</keyword>
<keyword id="KW-0325">Glycoprotein</keyword>
<keyword id="KW-0407">Ion channel</keyword>
<keyword id="KW-0406">Ion transport</keyword>
<keyword id="KW-0472">Membrane</keyword>
<keyword id="KW-0630">Potassium</keyword>
<keyword id="KW-0631">Potassium channel</keyword>
<keyword id="KW-0633">Potassium transport</keyword>
<keyword id="KW-1185">Reference proteome</keyword>
<keyword id="KW-0812">Transmembrane</keyword>
<keyword id="KW-1133">Transmembrane helix</keyword>
<keyword id="KW-0813">Transport</keyword>
<keyword id="KW-0851">Voltage-gated channel</keyword>
<reference key="1">
    <citation type="journal article" date="1998" name="J. Physiol. (Lond.)">
        <title>Cloning and functional expression of rat ether-a-go-go-like K+ channel genes.</title>
        <authorList>
            <person name="Engeland B."/>
            <person name="Neu A."/>
            <person name="Ludwig J."/>
            <person name="Roeper J."/>
            <person name="Pongs O."/>
        </authorList>
    </citation>
    <scope>NUCLEOTIDE SEQUENCE [MRNA]</scope>
    <scope>FUNCTION</scope>
    <scope>TRANSPORTER ACTIVITY</scope>
    <scope>TISSUE SPECIFICITY</scope>
    <source>
        <tissue>Brain cortex</tissue>
    </source>
</reference>
<reference key="2">
    <citation type="journal article" date="1999" name="J. Biol. Chem.">
        <title>New ether-a-go-go K+ channel family members localized in human telencephalon.</title>
        <authorList>
            <person name="Miyake A."/>
            <person name="Mochizuki S."/>
            <person name="Yokoi H."/>
            <person name="Kohda M."/>
            <person name="Furuichi K."/>
        </authorList>
    </citation>
    <scope>NUCLEOTIDE SEQUENCE [MRNA]</scope>
    <source>
        <tissue>Brain</tissue>
    </source>
</reference>
<reference key="3">
    <citation type="journal article" date="2001" name="J. Neurosci.">
        <title>Differential expression of genes encoding subthreshold-operating voltage-gated K+ channels in brain.</title>
        <authorList>
            <person name="Saganich M.J."/>
            <person name="Machado E."/>
            <person name="Rudy B."/>
        </authorList>
    </citation>
    <scope>TISSUE SPECIFICITY</scope>
</reference>